<feature type="chain" id="PRO_0000158554" description="Acylphosphatase">
    <location>
        <begin position="1"/>
        <end position="92"/>
    </location>
</feature>
<feature type="domain" description="Acylphosphatase-like" evidence="1">
    <location>
        <begin position="5"/>
        <end position="92"/>
    </location>
</feature>
<feature type="active site" evidence="1">
    <location>
        <position position="20"/>
    </location>
</feature>
<feature type="active site" evidence="1">
    <location>
        <position position="38"/>
    </location>
</feature>
<feature type="disulfide bond" evidence="1">
    <location>
        <begin position="5"/>
        <end position="49"/>
    </location>
</feature>
<name>ACYP_ECO57</name>
<dbReference type="EC" id="3.6.1.7" evidence="1"/>
<dbReference type="EMBL" id="AE005174">
    <property type="protein sequence ID" value="AAG55454.1"/>
    <property type="molecule type" value="Genomic_DNA"/>
</dbReference>
<dbReference type="EMBL" id="BA000007">
    <property type="protein sequence ID" value="BAB34475.1"/>
    <property type="molecule type" value="Genomic_DNA"/>
</dbReference>
<dbReference type="PIR" id="B85624">
    <property type="entry name" value="B85624"/>
</dbReference>
<dbReference type="PIR" id="D90760">
    <property type="entry name" value="D90760"/>
</dbReference>
<dbReference type="RefSeq" id="NP_309079.1">
    <property type="nucleotide sequence ID" value="NC_002695.1"/>
</dbReference>
<dbReference type="RefSeq" id="WP_000048252.1">
    <property type="nucleotide sequence ID" value="NZ_VOAI01000006.1"/>
</dbReference>
<dbReference type="BMRB" id="P0AB66"/>
<dbReference type="SMR" id="P0AB66"/>
<dbReference type="STRING" id="155864.Z1320"/>
<dbReference type="GeneID" id="916920"/>
<dbReference type="GeneID" id="93776446"/>
<dbReference type="KEGG" id="ece:Z1320"/>
<dbReference type="KEGG" id="ecs:ECs_1052"/>
<dbReference type="PATRIC" id="fig|386585.9.peg.1177"/>
<dbReference type="eggNOG" id="COG1254">
    <property type="taxonomic scope" value="Bacteria"/>
</dbReference>
<dbReference type="HOGENOM" id="CLU_141932_1_2_6"/>
<dbReference type="OMA" id="VGFRWSM"/>
<dbReference type="Proteomes" id="UP000000558">
    <property type="component" value="Chromosome"/>
</dbReference>
<dbReference type="Proteomes" id="UP000002519">
    <property type="component" value="Chromosome"/>
</dbReference>
<dbReference type="GO" id="GO:0003998">
    <property type="term" value="F:acylphosphatase activity"/>
    <property type="evidence" value="ECO:0007669"/>
    <property type="project" value="UniProtKB-UniRule"/>
</dbReference>
<dbReference type="FunFam" id="3.30.70.100:FF:000012">
    <property type="entry name" value="Acylphosphatase"/>
    <property type="match status" value="1"/>
</dbReference>
<dbReference type="Gene3D" id="3.30.70.100">
    <property type="match status" value="1"/>
</dbReference>
<dbReference type="HAMAP" id="MF_01450">
    <property type="entry name" value="Acylphosphatase_entero"/>
    <property type="match status" value="1"/>
</dbReference>
<dbReference type="InterPro" id="IPR020456">
    <property type="entry name" value="Acylphosphatase"/>
</dbReference>
<dbReference type="InterPro" id="IPR001792">
    <property type="entry name" value="Acylphosphatase-like_dom"/>
</dbReference>
<dbReference type="InterPro" id="IPR036046">
    <property type="entry name" value="Acylphosphatase-like_dom_sf"/>
</dbReference>
<dbReference type="InterPro" id="IPR028627">
    <property type="entry name" value="Acylphosphatase_bac"/>
</dbReference>
<dbReference type="InterPro" id="IPR017968">
    <property type="entry name" value="Acylphosphatase_CS"/>
</dbReference>
<dbReference type="NCBIfam" id="NF011000">
    <property type="entry name" value="PRK14426.1"/>
    <property type="match status" value="1"/>
</dbReference>
<dbReference type="PANTHER" id="PTHR47268">
    <property type="entry name" value="ACYLPHOSPHATASE"/>
    <property type="match status" value="1"/>
</dbReference>
<dbReference type="PANTHER" id="PTHR47268:SF4">
    <property type="entry name" value="ACYLPHOSPHATASE"/>
    <property type="match status" value="1"/>
</dbReference>
<dbReference type="Pfam" id="PF00708">
    <property type="entry name" value="Acylphosphatase"/>
    <property type="match status" value="1"/>
</dbReference>
<dbReference type="PRINTS" id="PR00112">
    <property type="entry name" value="ACYLPHPHTASE"/>
</dbReference>
<dbReference type="SUPFAM" id="SSF54975">
    <property type="entry name" value="Acylphosphatase/BLUF domain-like"/>
    <property type="match status" value="1"/>
</dbReference>
<dbReference type="PROSITE" id="PS00150">
    <property type="entry name" value="ACYLPHOSPHATASE_1"/>
    <property type="match status" value="1"/>
</dbReference>
<dbReference type="PROSITE" id="PS00151">
    <property type="entry name" value="ACYLPHOSPHATASE_2"/>
    <property type="match status" value="1"/>
</dbReference>
<dbReference type="PROSITE" id="PS51160">
    <property type="entry name" value="ACYLPHOSPHATASE_3"/>
    <property type="match status" value="1"/>
</dbReference>
<keyword id="KW-1015">Disulfide bond</keyword>
<keyword id="KW-0378">Hydrolase</keyword>
<keyword id="KW-1185">Reference proteome</keyword>
<sequence>MSKVCIIAWVYGRVQGVGFRYTTQYEAKRLGLTGYAKNLDDGSVEVVACGEEGQVEKLMQWLKSGGPRSARVERVLSEPHHPSGELTDFRIR</sequence>
<gene>
    <name evidence="1" type="primary">yccX</name>
    <name type="ordered locus">Z1320</name>
    <name type="ordered locus">ECs1052</name>
</gene>
<protein>
    <recommendedName>
        <fullName evidence="1">Acylphosphatase</fullName>
        <ecNumber evidence="1">3.6.1.7</ecNumber>
    </recommendedName>
    <alternativeName>
        <fullName evidence="1">Acylphosphate phosphohydrolase</fullName>
    </alternativeName>
</protein>
<reference key="1">
    <citation type="journal article" date="2001" name="Nature">
        <title>Genome sequence of enterohaemorrhagic Escherichia coli O157:H7.</title>
        <authorList>
            <person name="Perna N.T."/>
            <person name="Plunkett G. III"/>
            <person name="Burland V."/>
            <person name="Mau B."/>
            <person name="Glasner J.D."/>
            <person name="Rose D.J."/>
            <person name="Mayhew G.F."/>
            <person name="Evans P.S."/>
            <person name="Gregor J."/>
            <person name="Kirkpatrick H.A."/>
            <person name="Posfai G."/>
            <person name="Hackett J."/>
            <person name="Klink S."/>
            <person name="Boutin A."/>
            <person name="Shao Y."/>
            <person name="Miller L."/>
            <person name="Grotbeck E.J."/>
            <person name="Davis N.W."/>
            <person name="Lim A."/>
            <person name="Dimalanta E.T."/>
            <person name="Potamousis K."/>
            <person name="Apodaca J."/>
            <person name="Anantharaman T.S."/>
            <person name="Lin J."/>
            <person name="Yen G."/>
            <person name="Schwartz D.C."/>
            <person name="Welch R.A."/>
            <person name="Blattner F.R."/>
        </authorList>
    </citation>
    <scope>NUCLEOTIDE SEQUENCE [LARGE SCALE GENOMIC DNA]</scope>
    <source>
        <strain>O157:H7 / EDL933 / ATCC 700927 / EHEC</strain>
    </source>
</reference>
<reference key="2">
    <citation type="journal article" date="2001" name="DNA Res.">
        <title>Complete genome sequence of enterohemorrhagic Escherichia coli O157:H7 and genomic comparison with a laboratory strain K-12.</title>
        <authorList>
            <person name="Hayashi T."/>
            <person name="Makino K."/>
            <person name="Ohnishi M."/>
            <person name="Kurokawa K."/>
            <person name="Ishii K."/>
            <person name="Yokoyama K."/>
            <person name="Han C.-G."/>
            <person name="Ohtsubo E."/>
            <person name="Nakayama K."/>
            <person name="Murata T."/>
            <person name="Tanaka M."/>
            <person name="Tobe T."/>
            <person name="Iida T."/>
            <person name="Takami H."/>
            <person name="Honda T."/>
            <person name="Sasakawa C."/>
            <person name="Ogasawara N."/>
            <person name="Yasunaga T."/>
            <person name="Kuhara S."/>
            <person name="Shiba T."/>
            <person name="Hattori M."/>
            <person name="Shinagawa H."/>
        </authorList>
    </citation>
    <scope>NUCLEOTIDE SEQUENCE [LARGE SCALE GENOMIC DNA]</scope>
    <source>
        <strain>O157:H7 / Sakai / RIMD 0509952 / EHEC</strain>
    </source>
</reference>
<proteinExistence type="inferred from homology"/>
<organism>
    <name type="scientific">Escherichia coli O157:H7</name>
    <dbReference type="NCBI Taxonomy" id="83334"/>
    <lineage>
        <taxon>Bacteria</taxon>
        <taxon>Pseudomonadati</taxon>
        <taxon>Pseudomonadota</taxon>
        <taxon>Gammaproteobacteria</taxon>
        <taxon>Enterobacterales</taxon>
        <taxon>Enterobacteriaceae</taxon>
        <taxon>Escherichia</taxon>
    </lineage>
</organism>
<accession>P0AB66</accession>
<accession>P75877</accession>
<accession>Q9R7Q1</accession>
<comment type="catalytic activity">
    <reaction evidence="1">
        <text>an acyl phosphate + H2O = a carboxylate + phosphate + H(+)</text>
        <dbReference type="Rhea" id="RHEA:14965"/>
        <dbReference type="ChEBI" id="CHEBI:15377"/>
        <dbReference type="ChEBI" id="CHEBI:15378"/>
        <dbReference type="ChEBI" id="CHEBI:29067"/>
        <dbReference type="ChEBI" id="CHEBI:43474"/>
        <dbReference type="ChEBI" id="CHEBI:59918"/>
        <dbReference type="EC" id="3.6.1.7"/>
    </reaction>
</comment>
<comment type="similarity">
    <text evidence="1">Belongs to the acylphosphatase family.</text>
</comment>
<evidence type="ECO:0000255" key="1">
    <source>
        <dbReference type="HAMAP-Rule" id="MF_01450"/>
    </source>
</evidence>